<accession>B5YIG1</accession>
<protein>
    <recommendedName>
        <fullName evidence="1">Glutamate--tRNA ligase</fullName>
        <ecNumber evidence="1">6.1.1.17</ecNumber>
    </recommendedName>
    <alternativeName>
        <fullName evidence="1">Glutamyl-tRNA synthetase</fullName>
        <shortName evidence="1">GluRS</shortName>
    </alternativeName>
</protein>
<keyword id="KW-0030">Aminoacyl-tRNA synthetase</keyword>
<keyword id="KW-0067">ATP-binding</keyword>
<keyword id="KW-0963">Cytoplasm</keyword>
<keyword id="KW-0436">Ligase</keyword>
<keyword id="KW-0479">Metal-binding</keyword>
<keyword id="KW-0547">Nucleotide-binding</keyword>
<keyword id="KW-0648">Protein biosynthesis</keyword>
<keyword id="KW-1185">Reference proteome</keyword>
<keyword id="KW-0862">Zinc</keyword>
<name>SYE_THEYD</name>
<sequence>MVRVRFAPSPTGHLHIGGARTALFNWLFARHHNGKFILRIEDTDRSRSTEEYIESIIEAMKWLGLDWDEGPFRQTDRMEVYKAYAYKLLEEGKAYRCYCTPEELEERRQQAMKEGKPPRYDRRCREIKETLNKPFAIRFKMPLEGETVVDDLVKGKVTFKNSEIEDLVILRSDGTPTYNFCVVVDDFEMGITHVIRGEDHLNNTPKQIHIYHALGMNPPEFAHIPMILGTDRARLSKRHGATSVLSYRDEGYLSDALVNFLARLGWSYGDKEIFTREELIKYFNLEQVGKANAVFNAEKLLWLNSEYIKLTPEEKLFELVKPFLIKEGYLKEGETLDKDWACRAIKSLKERCRTLKELAHAMRYYLLDYVEIEPKAKEKYINAETVPVLREVTEKLAALEEFTQERIEKIFMDIVNEKGLKLGQVAQPVRVVMTGSTVSPGIYEVLEIAGKEKTLKRLRRVIDAS</sequence>
<reference key="1">
    <citation type="submission" date="2008-08" db="EMBL/GenBank/DDBJ databases">
        <title>The complete genome sequence of Thermodesulfovibrio yellowstonii strain ATCC 51303 / DSM 11347 / YP87.</title>
        <authorList>
            <person name="Dodson R.J."/>
            <person name="Durkin A.S."/>
            <person name="Wu M."/>
            <person name="Eisen J."/>
            <person name="Sutton G."/>
        </authorList>
    </citation>
    <scope>NUCLEOTIDE SEQUENCE [LARGE SCALE GENOMIC DNA]</scope>
    <source>
        <strain>ATCC 51303 / DSM 11347 / YP87</strain>
    </source>
</reference>
<feature type="chain" id="PRO_0000367785" description="Glutamate--tRNA ligase">
    <location>
        <begin position="1"/>
        <end position="465"/>
    </location>
</feature>
<feature type="short sequence motif" description="'HIGH' region" evidence="1">
    <location>
        <begin position="8"/>
        <end position="18"/>
    </location>
</feature>
<feature type="short sequence motif" description="'KMSKS' region" evidence="1">
    <location>
        <begin position="234"/>
        <end position="238"/>
    </location>
</feature>
<feature type="binding site" evidence="1">
    <location>
        <position position="97"/>
    </location>
    <ligand>
        <name>Zn(2+)</name>
        <dbReference type="ChEBI" id="CHEBI:29105"/>
    </ligand>
</feature>
<feature type="binding site" evidence="1">
    <location>
        <position position="99"/>
    </location>
    <ligand>
        <name>Zn(2+)</name>
        <dbReference type="ChEBI" id="CHEBI:29105"/>
    </ligand>
</feature>
<feature type="binding site" evidence="1">
    <location>
        <position position="124"/>
    </location>
    <ligand>
        <name>Zn(2+)</name>
        <dbReference type="ChEBI" id="CHEBI:29105"/>
    </ligand>
</feature>
<feature type="binding site" evidence="1">
    <location>
        <position position="126"/>
    </location>
    <ligand>
        <name>Zn(2+)</name>
        <dbReference type="ChEBI" id="CHEBI:29105"/>
    </ligand>
</feature>
<feature type="binding site" evidence="1">
    <location>
        <position position="237"/>
    </location>
    <ligand>
        <name>ATP</name>
        <dbReference type="ChEBI" id="CHEBI:30616"/>
    </ligand>
</feature>
<proteinExistence type="inferred from homology"/>
<evidence type="ECO:0000255" key="1">
    <source>
        <dbReference type="HAMAP-Rule" id="MF_00022"/>
    </source>
</evidence>
<comment type="function">
    <text evidence="1">Catalyzes the attachment of glutamate to tRNA(Glu) in a two-step reaction: glutamate is first activated by ATP to form Glu-AMP and then transferred to the acceptor end of tRNA(Glu).</text>
</comment>
<comment type="catalytic activity">
    <reaction evidence="1">
        <text>tRNA(Glu) + L-glutamate + ATP = L-glutamyl-tRNA(Glu) + AMP + diphosphate</text>
        <dbReference type="Rhea" id="RHEA:23540"/>
        <dbReference type="Rhea" id="RHEA-COMP:9663"/>
        <dbReference type="Rhea" id="RHEA-COMP:9680"/>
        <dbReference type="ChEBI" id="CHEBI:29985"/>
        <dbReference type="ChEBI" id="CHEBI:30616"/>
        <dbReference type="ChEBI" id="CHEBI:33019"/>
        <dbReference type="ChEBI" id="CHEBI:78442"/>
        <dbReference type="ChEBI" id="CHEBI:78520"/>
        <dbReference type="ChEBI" id="CHEBI:456215"/>
        <dbReference type="EC" id="6.1.1.17"/>
    </reaction>
</comment>
<comment type="cofactor">
    <cofactor evidence="1">
        <name>Zn(2+)</name>
        <dbReference type="ChEBI" id="CHEBI:29105"/>
    </cofactor>
    <text evidence="1">Binds 1 zinc ion per subunit.</text>
</comment>
<comment type="subunit">
    <text evidence="1">Monomer.</text>
</comment>
<comment type="subcellular location">
    <subcellularLocation>
        <location evidence="1">Cytoplasm</location>
    </subcellularLocation>
</comment>
<comment type="similarity">
    <text evidence="1">Belongs to the class-I aminoacyl-tRNA synthetase family. Glutamate--tRNA ligase type 1 subfamily.</text>
</comment>
<organism>
    <name type="scientific">Thermodesulfovibrio yellowstonii (strain ATCC 51303 / DSM 11347 / YP87)</name>
    <dbReference type="NCBI Taxonomy" id="289376"/>
    <lineage>
        <taxon>Bacteria</taxon>
        <taxon>Pseudomonadati</taxon>
        <taxon>Nitrospirota</taxon>
        <taxon>Thermodesulfovibrionia</taxon>
        <taxon>Thermodesulfovibrionales</taxon>
        <taxon>Thermodesulfovibrionaceae</taxon>
        <taxon>Thermodesulfovibrio</taxon>
    </lineage>
</organism>
<gene>
    <name evidence="1" type="primary">gltX</name>
    <name type="ordered locus">THEYE_A2003</name>
</gene>
<dbReference type="EC" id="6.1.1.17" evidence="1"/>
<dbReference type="EMBL" id="CP001147">
    <property type="protein sequence ID" value="ACI20684.1"/>
    <property type="molecule type" value="Genomic_DNA"/>
</dbReference>
<dbReference type="RefSeq" id="WP_012545418.1">
    <property type="nucleotide sequence ID" value="NC_011296.1"/>
</dbReference>
<dbReference type="RefSeq" id="YP_002249792.1">
    <property type="nucleotide sequence ID" value="NC_011296.1"/>
</dbReference>
<dbReference type="SMR" id="B5YIG1"/>
<dbReference type="FunCoup" id="B5YIG1">
    <property type="interactions" value="475"/>
</dbReference>
<dbReference type="STRING" id="289376.THEYE_A2003"/>
<dbReference type="EnsemblBacteria" id="ACI20684">
    <property type="protein sequence ID" value="ACI20684"/>
    <property type="gene ID" value="THEYE_A2003"/>
</dbReference>
<dbReference type="KEGG" id="tye:THEYE_A2003"/>
<dbReference type="PATRIC" id="fig|289376.4.peg.1957"/>
<dbReference type="eggNOG" id="COG0008">
    <property type="taxonomic scope" value="Bacteria"/>
</dbReference>
<dbReference type="HOGENOM" id="CLU_015768_6_3_0"/>
<dbReference type="InParanoid" id="B5YIG1"/>
<dbReference type="OrthoDB" id="9807503at2"/>
<dbReference type="Proteomes" id="UP000000718">
    <property type="component" value="Chromosome"/>
</dbReference>
<dbReference type="GO" id="GO:0005829">
    <property type="term" value="C:cytosol"/>
    <property type="evidence" value="ECO:0000318"/>
    <property type="project" value="GO_Central"/>
</dbReference>
<dbReference type="GO" id="GO:0005524">
    <property type="term" value="F:ATP binding"/>
    <property type="evidence" value="ECO:0007669"/>
    <property type="project" value="UniProtKB-UniRule"/>
</dbReference>
<dbReference type="GO" id="GO:0004818">
    <property type="term" value="F:glutamate-tRNA ligase activity"/>
    <property type="evidence" value="ECO:0000318"/>
    <property type="project" value="GO_Central"/>
</dbReference>
<dbReference type="GO" id="GO:0000049">
    <property type="term" value="F:tRNA binding"/>
    <property type="evidence" value="ECO:0007669"/>
    <property type="project" value="InterPro"/>
</dbReference>
<dbReference type="GO" id="GO:0008270">
    <property type="term" value="F:zinc ion binding"/>
    <property type="evidence" value="ECO:0007669"/>
    <property type="project" value="UniProtKB-UniRule"/>
</dbReference>
<dbReference type="GO" id="GO:0006424">
    <property type="term" value="P:glutamyl-tRNA aminoacylation"/>
    <property type="evidence" value="ECO:0000318"/>
    <property type="project" value="GO_Central"/>
</dbReference>
<dbReference type="CDD" id="cd00808">
    <property type="entry name" value="GluRS_core"/>
    <property type="match status" value="1"/>
</dbReference>
<dbReference type="FunFam" id="1.10.10.350:FF:000002">
    <property type="entry name" value="Glutamate--tRNA ligase"/>
    <property type="match status" value="1"/>
</dbReference>
<dbReference type="FunFam" id="3.40.50.620:FF:000007">
    <property type="entry name" value="Glutamate--tRNA ligase"/>
    <property type="match status" value="1"/>
</dbReference>
<dbReference type="FunFam" id="1.10.8.70:FF:000003">
    <property type="entry name" value="Glutamate--tRNA ligase 1"/>
    <property type="match status" value="1"/>
</dbReference>
<dbReference type="Gene3D" id="1.10.10.350">
    <property type="match status" value="1"/>
</dbReference>
<dbReference type="Gene3D" id="1.10.8.70">
    <property type="entry name" value="Glutamate-tRNA synthetase, class I, anticodon-binding domain 1"/>
    <property type="match status" value="1"/>
</dbReference>
<dbReference type="Gene3D" id="3.40.50.620">
    <property type="entry name" value="HUPs"/>
    <property type="match status" value="1"/>
</dbReference>
<dbReference type="HAMAP" id="MF_00022">
    <property type="entry name" value="Glu_tRNA_synth_type1"/>
    <property type="match status" value="1"/>
</dbReference>
<dbReference type="InterPro" id="IPR045462">
    <property type="entry name" value="aa-tRNA-synth_I_cd-bd"/>
</dbReference>
<dbReference type="InterPro" id="IPR020751">
    <property type="entry name" value="aa-tRNA-synth_I_codon-bd_sub2"/>
</dbReference>
<dbReference type="InterPro" id="IPR001412">
    <property type="entry name" value="aa-tRNA-synth_I_CS"/>
</dbReference>
<dbReference type="InterPro" id="IPR008925">
    <property type="entry name" value="aa_tRNA-synth_I_cd-bd_sf"/>
</dbReference>
<dbReference type="InterPro" id="IPR004527">
    <property type="entry name" value="Glu-tRNA-ligase_bac/mito"/>
</dbReference>
<dbReference type="InterPro" id="IPR020752">
    <property type="entry name" value="Glu-tRNA-synth_I_codon-bd_sub1"/>
</dbReference>
<dbReference type="InterPro" id="IPR000924">
    <property type="entry name" value="Glu/Gln-tRNA-synth"/>
</dbReference>
<dbReference type="InterPro" id="IPR020058">
    <property type="entry name" value="Glu/Gln-tRNA-synth_Ib_cat-dom"/>
</dbReference>
<dbReference type="InterPro" id="IPR049940">
    <property type="entry name" value="GluQ/Sye"/>
</dbReference>
<dbReference type="InterPro" id="IPR033910">
    <property type="entry name" value="GluRS_core"/>
</dbReference>
<dbReference type="InterPro" id="IPR014729">
    <property type="entry name" value="Rossmann-like_a/b/a_fold"/>
</dbReference>
<dbReference type="NCBIfam" id="TIGR00464">
    <property type="entry name" value="gltX_bact"/>
    <property type="match status" value="1"/>
</dbReference>
<dbReference type="PANTHER" id="PTHR43311">
    <property type="entry name" value="GLUTAMATE--TRNA LIGASE"/>
    <property type="match status" value="1"/>
</dbReference>
<dbReference type="PANTHER" id="PTHR43311:SF2">
    <property type="entry name" value="GLUTAMATE--TRNA LIGASE, MITOCHONDRIAL-RELATED"/>
    <property type="match status" value="1"/>
</dbReference>
<dbReference type="Pfam" id="PF19269">
    <property type="entry name" value="Anticodon_2"/>
    <property type="match status" value="1"/>
</dbReference>
<dbReference type="Pfam" id="PF00749">
    <property type="entry name" value="tRNA-synt_1c"/>
    <property type="match status" value="1"/>
</dbReference>
<dbReference type="PRINTS" id="PR00987">
    <property type="entry name" value="TRNASYNTHGLU"/>
</dbReference>
<dbReference type="SUPFAM" id="SSF48163">
    <property type="entry name" value="An anticodon-binding domain of class I aminoacyl-tRNA synthetases"/>
    <property type="match status" value="1"/>
</dbReference>
<dbReference type="SUPFAM" id="SSF52374">
    <property type="entry name" value="Nucleotidylyl transferase"/>
    <property type="match status" value="1"/>
</dbReference>
<dbReference type="PROSITE" id="PS00178">
    <property type="entry name" value="AA_TRNA_LIGASE_I"/>
    <property type="match status" value="1"/>
</dbReference>